<evidence type="ECO:0000255" key="1">
    <source>
        <dbReference type="HAMAP-Rule" id="MF_00498"/>
    </source>
</evidence>
<sequence length="167" mass="18469">MRKIITLVSREQAVIGHRFRVVSIPDECKSCKLYAVCLGKLTPGRSYEVIEIRPSLGQRCKITGEEVVPVVAAELPIVGLVPLNKALEGAIVTFEGECKGCKDCPDNIVKPGEKIKIIRVLGRTRCKDRDFATVEFYILEAPLPSELGAVGTYQDHSRAPLLRRPLK</sequence>
<organism>
    <name type="scientific">Pyrobaculum islandicum (strain DSM 4184 / JCM 9189 / GEO3)</name>
    <dbReference type="NCBI Taxonomy" id="384616"/>
    <lineage>
        <taxon>Archaea</taxon>
        <taxon>Thermoproteota</taxon>
        <taxon>Thermoprotei</taxon>
        <taxon>Thermoproteales</taxon>
        <taxon>Thermoproteaceae</taxon>
        <taxon>Pyrobaculum</taxon>
    </lineage>
</organism>
<name>Y688_PYRIL</name>
<gene>
    <name type="ordered locus">Pisl_0688</name>
</gene>
<comment type="similarity">
    <text evidence="1">Belongs to the UPF0179 family.</text>
</comment>
<dbReference type="EMBL" id="CP000504">
    <property type="protein sequence ID" value="ABL87866.1"/>
    <property type="molecule type" value="Genomic_DNA"/>
</dbReference>
<dbReference type="RefSeq" id="WP_011762442.1">
    <property type="nucleotide sequence ID" value="NC_008701.1"/>
</dbReference>
<dbReference type="STRING" id="384616.Pisl_0688"/>
<dbReference type="GeneID" id="4617868"/>
<dbReference type="KEGG" id="pis:Pisl_0688"/>
<dbReference type="eggNOG" id="arCOG04477">
    <property type="taxonomic scope" value="Archaea"/>
</dbReference>
<dbReference type="HOGENOM" id="CLU_121764_0_0_2"/>
<dbReference type="OrthoDB" id="24613at2157"/>
<dbReference type="Proteomes" id="UP000002595">
    <property type="component" value="Chromosome"/>
</dbReference>
<dbReference type="HAMAP" id="MF_00498">
    <property type="entry name" value="UPF0179"/>
    <property type="match status" value="1"/>
</dbReference>
<dbReference type="InterPro" id="IPR005369">
    <property type="entry name" value="UPF0179"/>
</dbReference>
<dbReference type="PANTHER" id="PTHR40699">
    <property type="entry name" value="UPF0179 PROTEIN MJ1627"/>
    <property type="match status" value="1"/>
</dbReference>
<dbReference type="PANTHER" id="PTHR40699:SF1">
    <property type="entry name" value="UPF0179 PROTEIN MJ1627"/>
    <property type="match status" value="1"/>
</dbReference>
<dbReference type="Pfam" id="PF03684">
    <property type="entry name" value="UPF0179"/>
    <property type="match status" value="1"/>
</dbReference>
<proteinExistence type="inferred from homology"/>
<protein>
    <recommendedName>
        <fullName evidence="1">UPF0179 protein Pisl_0688</fullName>
    </recommendedName>
</protein>
<feature type="chain" id="PRO_0000378137" description="UPF0179 protein Pisl_0688">
    <location>
        <begin position="1"/>
        <end position="167"/>
    </location>
</feature>
<reference key="1">
    <citation type="submission" date="2006-12" db="EMBL/GenBank/DDBJ databases">
        <title>Complete sequence of Pyrobaculum islandicum DSM 4184.</title>
        <authorList>
            <person name="Copeland A."/>
            <person name="Lucas S."/>
            <person name="Lapidus A."/>
            <person name="Barry K."/>
            <person name="Detter J.C."/>
            <person name="Glavina del Rio T."/>
            <person name="Dalin E."/>
            <person name="Tice H."/>
            <person name="Pitluck S."/>
            <person name="Meincke L."/>
            <person name="Brettin T."/>
            <person name="Bruce D."/>
            <person name="Han C."/>
            <person name="Tapia R."/>
            <person name="Gilna P."/>
            <person name="Schmutz J."/>
            <person name="Larimer F."/>
            <person name="Land M."/>
            <person name="Hauser L."/>
            <person name="Kyrpides N."/>
            <person name="Mikhailova N."/>
            <person name="Cozen A.E."/>
            <person name="Fitz-Gibbon S.T."/>
            <person name="House C.H."/>
            <person name="Saltikov C."/>
            <person name="Lowe T."/>
            <person name="Richardson P."/>
        </authorList>
    </citation>
    <scope>NUCLEOTIDE SEQUENCE [LARGE SCALE GENOMIC DNA]</scope>
    <source>
        <strain>DSM 4184 / JCM 9189 / GEO3</strain>
    </source>
</reference>
<accession>A1RSD4</accession>